<organism>
    <name type="scientific">Rickettsia conorii (strain ATCC VR-613 / Malish 7)</name>
    <dbReference type="NCBI Taxonomy" id="272944"/>
    <lineage>
        <taxon>Bacteria</taxon>
        <taxon>Pseudomonadati</taxon>
        <taxon>Pseudomonadota</taxon>
        <taxon>Alphaproteobacteria</taxon>
        <taxon>Rickettsiales</taxon>
        <taxon>Rickettsiaceae</taxon>
        <taxon>Rickettsieae</taxon>
        <taxon>Rickettsia</taxon>
        <taxon>spotted fever group</taxon>
    </lineage>
</organism>
<dbReference type="EC" id="5.4.99.24"/>
<dbReference type="EMBL" id="AE006914">
    <property type="protein sequence ID" value="AAL02882.1"/>
    <property type="molecule type" value="Genomic_DNA"/>
</dbReference>
<dbReference type="PIR" id="H97742">
    <property type="entry name" value="H97742"/>
</dbReference>
<dbReference type="RefSeq" id="WP_010976999.1">
    <property type="nucleotide sequence ID" value="NC_003103.1"/>
</dbReference>
<dbReference type="SMR" id="Q92IS6"/>
<dbReference type="GeneID" id="927888"/>
<dbReference type="KEGG" id="rco:RC0344"/>
<dbReference type="PATRIC" id="fig|272944.4.peg.392"/>
<dbReference type="HOGENOM" id="CLU_016902_1_2_5"/>
<dbReference type="Proteomes" id="UP000000816">
    <property type="component" value="Chromosome"/>
</dbReference>
<dbReference type="GO" id="GO:0160141">
    <property type="term" value="F:23S rRNA pseudouridine(955/2504/2580) synthase activity"/>
    <property type="evidence" value="ECO:0007669"/>
    <property type="project" value="UniProtKB-EC"/>
</dbReference>
<dbReference type="GO" id="GO:0003723">
    <property type="term" value="F:RNA binding"/>
    <property type="evidence" value="ECO:0007669"/>
    <property type="project" value="UniProtKB-KW"/>
</dbReference>
<dbReference type="GO" id="GO:0000455">
    <property type="term" value="P:enzyme-directed rRNA pseudouridine synthesis"/>
    <property type="evidence" value="ECO:0007669"/>
    <property type="project" value="UniProtKB-ARBA"/>
</dbReference>
<dbReference type="CDD" id="cd02869">
    <property type="entry name" value="PseudoU_synth_RluA_like"/>
    <property type="match status" value="1"/>
</dbReference>
<dbReference type="CDD" id="cd00165">
    <property type="entry name" value="S4"/>
    <property type="match status" value="1"/>
</dbReference>
<dbReference type="Gene3D" id="3.30.2350.10">
    <property type="entry name" value="Pseudouridine synthase"/>
    <property type="match status" value="1"/>
</dbReference>
<dbReference type="Gene3D" id="3.10.290.10">
    <property type="entry name" value="RNA-binding S4 domain"/>
    <property type="match status" value="1"/>
</dbReference>
<dbReference type="InterPro" id="IPR020103">
    <property type="entry name" value="PsdUridine_synth_cat_dom_sf"/>
</dbReference>
<dbReference type="InterPro" id="IPR006224">
    <property type="entry name" value="PsdUridine_synth_RluA-like_CS"/>
</dbReference>
<dbReference type="InterPro" id="IPR006145">
    <property type="entry name" value="PsdUridine_synth_RsuA/RluA"/>
</dbReference>
<dbReference type="InterPro" id="IPR050188">
    <property type="entry name" value="RluA_PseudoU_synthase"/>
</dbReference>
<dbReference type="InterPro" id="IPR002942">
    <property type="entry name" value="S4_RNA-bd"/>
</dbReference>
<dbReference type="InterPro" id="IPR036986">
    <property type="entry name" value="S4_RNA-bd_sf"/>
</dbReference>
<dbReference type="PANTHER" id="PTHR21600">
    <property type="entry name" value="MITOCHONDRIAL RNA PSEUDOURIDINE SYNTHASE"/>
    <property type="match status" value="1"/>
</dbReference>
<dbReference type="PANTHER" id="PTHR21600:SF83">
    <property type="entry name" value="PSEUDOURIDYLATE SYNTHASE RPUSD4, MITOCHONDRIAL"/>
    <property type="match status" value="1"/>
</dbReference>
<dbReference type="Pfam" id="PF00849">
    <property type="entry name" value="PseudoU_synth_2"/>
    <property type="match status" value="1"/>
</dbReference>
<dbReference type="Pfam" id="PF01479">
    <property type="entry name" value="S4"/>
    <property type="match status" value="1"/>
</dbReference>
<dbReference type="SMART" id="SM00363">
    <property type="entry name" value="S4"/>
    <property type="match status" value="1"/>
</dbReference>
<dbReference type="SUPFAM" id="SSF55174">
    <property type="entry name" value="Alpha-L RNA-binding motif"/>
    <property type="match status" value="1"/>
</dbReference>
<dbReference type="SUPFAM" id="SSF55120">
    <property type="entry name" value="Pseudouridine synthase"/>
    <property type="match status" value="1"/>
</dbReference>
<dbReference type="PROSITE" id="PS01129">
    <property type="entry name" value="PSI_RLU"/>
    <property type="match status" value="1"/>
</dbReference>
<dbReference type="PROSITE" id="PS50889">
    <property type="entry name" value="S4"/>
    <property type="match status" value="1"/>
</dbReference>
<comment type="function">
    <text evidence="1">Responsible for synthesis of pseudouridine from uracil at positions 955, 2504 and 2580 in 23S ribosomal RNA.</text>
</comment>
<comment type="catalytic activity">
    <reaction>
        <text>uridine(955/2504/2580) in 23S rRNA = pseudouridine(955/2504/2580) in 23S rRNA</text>
        <dbReference type="Rhea" id="RHEA:42528"/>
        <dbReference type="Rhea" id="RHEA-COMP:10099"/>
        <dbReference type="Rhea" id="RHEA-COMP:10100"/>
        <dbReference type="ChEBI" id="CHEBI:65314"/>
        <dbReference type="ChEBI" id="CHEBI:65315"/>
        <dbReference type="EC" id="5.4.99.24"/>
    </reaction>
</comment>
<comment type="similarity">
    <text evidence="3">Belongs to the pseudouridine synthase RluA family.</text>
</comment>
<evidence type="ECO:0000250" key="1"/>
<evidence type="ECO:0000255" key="2">
    <source>
        <dbReference type="PROSITE-ProRule" id="PRU00182"/>
    </source>
</evidence>
<evidence type="ECO:0000305" key="3"/>
<sequence>MIIDVNTPISSRLDKYLKRLYPLLTQGVIEKALRQKQITVNAQKAEASLRVKGGDKIFINDKFNLPVKQPEKLVFTDAEIKLAKKITTDYLIYADDNLIAINKPAGLATQGGTKINLSIDSALKYLNYKGADFKLVHRLDKKTSGLLLIAKNYLSSVKLHNAFKEKLVVKTYFAVTYGKPIKNVGEVRSNIEKSKGSTPKITDIDSENGKLAITYYKVLKSLDNNLFLIEFTPVTGRMHQLRLHAKLLGCPILGDDKYGNKEIMPYSKYMFLHANNICLSEKIFGQESKLEAKLPFYFTRRLT</sequence>
<name>RLUC_RICCN</name>
<protein>
    <recommendedName>
        <fullName>Ribosomal large subunit pseudouridine synthase C</fullName>
        <ecNumber>5.4.99.24</ecNumber>
    </recommendedName>
    <alternativeName>
        <fullName>23S rRNA pseudouridine(955/2504/2580) synthase</fullName>
    </alternativeName>
    <alternativeName>
        <fullName>rRNA pseudouridylate synthase C</fullName>
    </alternativeName>
    <alternativeName>
        <fullName>rRNA-uridine isomerase C</fullName>
    </alternativeName>
</protein>
<reference key="1">
    <citation type="journal article" date="2001" name="Science">
        <title>Mechanisms of evolution in Rickettsia conorii and R. prowazekii.</title>
        <authorList>
            <person name="Ogata H."/>
            <person name="Audic S."/>
            <person name="Renesto-Audiffren P."/>
            <person name="Fournier P.-E."/>
            <person name="Barbe V."/>
            <person name="Samson D."/>
            <person name="Roux V."/>
            <person name="Cossart P."/>
            <person name="Weissenbach J."/>
            <person name="Claverie J.-M."/>
            <person name="Raoult D."/>
        </authorList>
    </citation>
    <scope>NUCLEOTIDE SEQUENCE [LARGE SCALE GENOMIC DNA]</scope>
    <source>
        <strain>ATCC VR-613 / Malish 7</strain>
    </source>
</reference>
<gene>
    <name type="primary">rluC</name>
    <name type="ordered locus">RC0344</name>
</gene>
<accession>Q92IS6</accession>
<keyword id="KW-0413">Isomerase</keyword>
<keyword id="KW-0694">RNA-binding</keyword>
<keyword id="KW-0698">rRNA processing</keyword>
<proteinExistence type="inferred from homology"/>
<feature type="chain" id="PRO_0000162674" description="Ribosomal large subunit pseudouridine synthase C">
    <location>
        <begin position="1"/>
        <end position="303"/>
    </location>
</feature>
<feature type="domain" description="S4 RNA-binding" evidence="2">
    <location>
        <begin position="11"/>
        <end position="70"/>
    </location>
</feature>
<feature type="active site" evidence="1">
    <location>
        <position position="140"/>
    </location>
</feature>